<gene>
    <name evidence="1" type="primary">recR</name>
    <name type="ordered locus">Shewmr7_2324</name>
</gene>
<proteinExistence type="inferred from homology"/>
<protein>
    <recommendedName>
        <fullName evidence="1">Recombination protein RecR</fullName>
    </recommendedName>
</protein>
<name>RECR_SHESR</name>
<organism>
    <name type="scientific">Shewanella sp. (strain MR-7)</name>
    <dbReference type="NCBI Taxonomy" id="60481"/>
    <lineage>
        <taxon>Bacteria</taxon>
        <taxon>Pseudomonadati</taxon>
        <taxon>Pseudomonadota</taxon>
        <taxon>Gammaproteobacteria</taxon>
        <taxon>Alteromonadales</taxon>
        <taxon>Shewanellaceae</taxon>
        <taxon>Shewanella</taxon>
    </lineage>
</organism>
<evidence type="ECO:0000255" key="1">
    <source>
        <dbReference type="HAMAP-Rule" id="MF_00017"/>
    </source>
</evidence>
<comment type="function">
    <text evidence="1">May play a role in DNA repair. It seems to be involved in an RecBC-independent recombinational process of DNA repair. It may act with RecF and RecO.</text>
</comment>
<comment type="similarity">
    <text evidence="1">Belongs to the RecR family.</text>
</comment>
<sequence>MKFSPLLDELIQSLRCLPGVGPKSAQRMAFQLLERDRKAGLKLASALSSAMSDIGHCQSCRTYTEESLCPICASHKRGSSSTICVVETPADVLAIEAGGHFSGRYFVLLGHLSPLDGVGPEELGLALLERHLASGDVAELILATNPTVEGEATAHFIADMARRHKVVISRIAHGVPVGGELEYVDSTTLALSFNGRIPL</sequence>
<reference key="1">
    <citation type="submission" date="2006-08" db="EMBL/GenBank/DDBJ databases">
        <title>Complete sequence of chromosome 1 of Shewanella sp. MR-7.</title>
        <authorList>
            <person name="Copeland A."/>
            <person name="Lucas S."/>
            <person name="Lapidus A."/>
            <person name="Barry K."/>
            <person name="Detter J.C."/>
            <person name="Glavina del Rio T."/>
            <person name="Hammon N."/>
            <person name="Israni S."/>
            <person name="Dalin E."/>
            <person name="Tice H."/>
            <person name="Pitluck S."/>
            <person name="Kiss H."/>
            <person name="Brettin T."/>
            <person name="Bruce D."/>
            <person name="Han C."/>
            <person name="Tapia R."/>
            <person name="Gilna P."/>
            <person name="Schmutz J."/>
            <person name="Larimer F."/>
            <person name="Land M."/>
            <person name="Hauser L."/>
            <person name="Kyrpides N."/>
            <person name="Mikhailova N."/>
            <person name="Nealson K."/>
            <person name="Konstantinidis K."/>
            <person name="Klappenbach J."/>
            <person name="Tiedje J."/>
            <person name="Richardson P."/>
        </authorList>
    </citation>
    <scope>NUCLEOTIDE SEQUENCE [LARGE SCALE GENOMIC DNA]</scope>
    <source>
        <strain>MR-7</strain>
    </source>
</reference>
<accession>Q0HU94</accession>
<feature type="chain" id="PRO_1000001609" description="Recombination protein RecR">
    <location>
        <begin position="1"/>
        <end position="199"/>
    </location>
</feature>
<feature type="domain" description="Toprim" evidence="1">
    <location>
        <begin position="81"/>
        <end position="176"/>
    </location>
</feature>
<feature type="zinc finger region" description="C4-type" evidence="1">
    <location>
        <begin position="57"/>
        <end position="72"/>
    </location>
</feature>
<keyword id="KW-0227">DNA damage</keyword>
<keyword id="KW-0233">DNA recombination</keyword>
<keyword id="KW-0234">DNA repair</keyword>
<keyword id="KW-0479">Metal-binding</keyword>
<keyword id="KW-0862">Zinc</keyword>
<keyword id="KW-0863">Zinc-finger</keyword>
<dbReference type="EMBL" id="CP000444">
    <property type="protein sequence ID" value="ABI43311.1"/>
    <property type="molecule type" value="Genomic_DNA"/>
</dbReference>
<dbReference type="SMR" id="Q0HU94"/>
<dbReference type="KEGG" id="shm:Shewmr7_2324"/>
<dbReference type="HOGENOM" id="CLU_060739_1_2_6"/>
<dbReference type="GO" id="GO:0003677">
    <property type="term" value="F:DNA binding"/>
    <property type="evidence" value="ECO:0007669"/>
    <property type="project" value="UniProtKB-UniRule"/>
</dbReference>
<dbReference type="GO" id="GO:0008270">
    <property type="term" value="F:zinc ion binding"/>
    <property type="evidence" value="ECO:0007669"/>
    <property type="project" value="UniProtKB-KW"/>
</dbReference>
<dbReference type="GO" id="GO:0006310">
    <property type="term" value="P:DNA recombination"/>
    <property type="evidence" value="ECO:0007669"/>
    <property type="project" value="UniProtKB-UniRule"/>
</dbReference>
<dbReference type="GO" id="GO:0006281">
    <property type="term" value="P:DNA repair"/>
    <property type="evidence" value="ECO:0007669"/>
    <property type="project" value="UniProtKB-UniRule"/>
</dbReference>
<dbReference type="CDD" id="cd01025">
    <property type="entry name" value="TOPRIM_recR"/>
    <property type="match status" value="1"/>
</dbReference>
<dbReference type="FunFam" id="1.10.8.420:FF:000001">
    <property type="entry name" value="Recombination protein RecR"/>
    <property type="match status" value="1"/>
</dbReference>
<dbReference type="FunFam" id="3.40.1360.10:FF:000001">
    <property type="entry name" value="Recombination protein RecR"/>
    <property type="match status" value="1"/>
</dbReference>
<dbReference type="Gene3D" id="3.40.1360.10">
    <property type="match status" value="1"/>
</dbReference>
<dbReference type="Gene3D" id="6.10.250.240">
    <property type="match status" value="1"/>
</dbReference>
<dbReference type="Gene3D" id="1.10.8.420">
    <property type="entry name" value="RecR Domain 1"/>
    <property type="match status" value="1"/>
</dbReference>
<dbReference type="HAMAP" id="MF_00017">
    <property type="entry name" value="RecR"/>
    <property type="match status" value="1"/>
</dbReference>
<dbReference type="InterPro" id="IPR000093">
    <property type="entry name" value="DNA_Rcmb_RecR"/>
</dbReference>
<dbReference type="InterPro" id="IPR023627">
    <property type="entry name" value="Rcmb_RecR"/>
</dbReference>
<dbReference type="InterPro" id="IPR015967">
    <property type="entry name" value="Rcmb_RecR_Znf"/>
</dbReference>
<dbReference type="InterPro" id="IPR006171">
    <property type="entry name" value="TOPRIM_dom"/>
</dbReference>
<dbReference type="InterPro" id="IPR034137">
    <property type="entry name" value="TOPRIM_RecR"/>
</dbReference>
<dbReference type="NCBIfam" id="TIGR00615">
    <property type="entry name" value="recR"/>
    <property type="match status" value="1"/>
</dbReference>
<dbReference type="PANTHER" id="PTHR30446">
    <property type="entry name" value="RECOMBINATION PROTEIN RECR"/>
    <property type="match status" value="1"/>
</dbReference>
<dbReference type="PANTHER" id="PTHR30446:SF0">
    <property type="entry name" value="RECOMBINATION PROTEIN RECR"/>
    <property type="match status" value="1"/>
</dbReference>
<dbReference type="Pfam" id="PF21175">
    <property type="entry name" value="RecR_C"/>
    <property type="match status" value="1"/>
</dbReference>
<dbReference type="Pfam" id="PF21176">
    <property type="entry name" value="RecR_HhH"/>
    <property type="match status" value="1"/>
</dbReference>
<dbReference type="Pfam" id="PF02132">
    <property type="entry name" value="RecR_ZnF"/>
    <property type="match status" value="1"/>
</dbReference>
<dbReference type="Pfam" id="PF13662">
    <property type="entry name" value="Toprim_4"/>
    <property type="match status" value="1"/>
</dbReference>
<dbReference type="SMART" id="SM00493">
    <property type="entry name" value="TOPRIM"/>
    <property type="match status" value="1"/>
</dbReference>
<dbReference type="SUPFAM" id="SSF111304">
    <property type="entry name" value="Recombination protein RecR"/>
    <property type="match status" value="1"/>
</dbReference>
<dbReference type="PROSITE" id="PS50880">
    <property type="entry name" value="TOPRIM"/>
    <property type="match status" value="1"/>
</dbReference>